<evidence type="ECO:0000255" key="1"/>
<evidence type="ECO:0000269" key="2">
    <source>
    </source>
</evidence>
<evidence type="ECO:0000303" key="3">
    <source>
    </source>
</evidence>
<evidence type="ECO:0000305" key="4"/>
<evidence type="ECO:0000312" key="5">
    <source>
        <dbReference type="EMBL" id="AAO12206.1"/>
    </source>
</evidence>
<organism>
    <name type="scientific">Dahlia pinnata</name>
    <name type="common">Pinnate dahlia</name>
    <name type="synonym">Dahlia variabilis</name>
    <dbReference type="NCBI Taxonomy" id="101596"/>
    <lineage>
        <taxon>Eukaryota</taxon>
        <taxon>Viridiplantae</taxon>
        <taxon>Streptophyta</taxon>
        <taxon>Embryophyta</taxon>
        <taxon>Tracheophyta</taxon>
        <taxon>Spermatophyta</taxon>
        <taxon>Magnoliopsida</taxon>
        <taxon>eudicotyledons</taxon>
        <taxon>Gunneridae</taxon>
        <taxon>Pentapetalae</taxon>
        <taxon>asterids</taxon>
        <taxon>campanulids</taxon>
        <taxon>Asterales</taxon>
        <taxon>Asteraceae</taxon>
        <taxon>Asteroideae</taxon>
        <taxon>Heliantheae alliance</taxon>
        <taxon>Coreopsideae</taxon>
        <taxon>Dahlia</taxon>
    </lineage>
</organism>
<protein>
    <recommendedName>
        <fullName evidence="3">Malonyl-coenzyme A:anthocyanin 3-O-glucoside-6''-O-malonyltransferase</fullName>
        <shortName evidence="3">Dv3MaT</shortName>
        <shortName evidence="5">Malonyl CoA:anthocyanin 3-O-glucoside-6''-O-malonyltransferase</shortName>
        <ecNumber>2.3.1.171</ecNumber>
    </recommendedName>
</protein>
<name>3MAT_DAHPI</name>
<feature type="chain" id="PRO_0000405126" description="Malonyl-coenzyme A:anthocyanin 3-O-glucoside-6''-O-malonyltransferase">
    <location>
        <begin position="1"/>
        <end position="460"/>
    </location>
</feature>
<feature type="active site" description="Proton acceptor" evidence="1">
    <location>
        <position position="173"/>
    </location>
</feature>
<feature type="active site" description="Proton acceptor" evidence="1">
    <location>
        <position position="400"/>
    </location>
</feature>
<gene>
    <name evidence="3" type="primary">3MAT</name>
</gene>
<proteinExistence type="evidence at protein level"/>
<dbReference type="EC" id="2.3.1.171"/>
<dbReference type="EMBL" id="AF489108">
    <property type="protein sequence ID" value="AAO12206.1"/>
    <property type="molecule type" value="mRNA"/>
</dbReference>
<dbReference type="SMR" id="Q8GSN8"/>
<dbReference type="KEGG" id="ag:AAO12206"/>
<dbReference type="BioCyc" id="MetaCyc:MONOMER-12015"/>
<dbReference type="BRENDA" id="2.3.1.171">
    <property type="organism ID" value="1828"/>
</dbReference>
<dbReference type="GO" id="GO:0033809">
    <property type="term" value="F:anthocyanin 6''-O-malonyltransferase activity"/>
    <property type="evidence" value="ECO:0000314"/>
    <property type="project" value="UniProtKB"/>
</dbReference>
<dbReference type="GO" id="GO:0009698">
    <property type="term" value="P:phenylpropanoid metabolic process"/>
    <property type="evidence" value="ECO:0007669"/>
    <property type="project" value="UniProtKB-KW"/>
</dbReference>
<dbReference type="FunFam" id="3.30.559.10:FF:000035">
    <property type="entry name" value="Phenolic glucoside malonyltransferase 1"/>
    <property type="match status" value="1"/>
</dbReference>
<dbReference type="FunFam" id="3.30.559.10:FF:000046">
    <property type="entry name" value="Phenolic glucoside malonyltransferase 1"/>
    <property type="match status" value="1"/>
</dbReference>
<dbReference type="Gene3D" id="3.30.559.10">
    <property type="entry name" value="Chloramphenicol acetyltransferase-like domain"/>
    <property type="match status" value="2"/>
</dbReference>
<dbReference type="InterPro" id="IPR023213">
    <property type="entry name" value="CAT-like_dom_sf"/>
</dbReference>
<dbReference type="InterPro" id="IPR051504">
    <property type="entry name" value="Plant_metabolite_acyltrans"/>
</dbReference>
<dbReference type="PANTHER" id="PTHR31625">
    <property type="match status" value="1"/>
</dbReference>
<dbReference type="Pfam" id="PF02458">
    <property type="entry name" value="Transferase"/>
    <property type="match status" value="1"/>
</dbReference>
<keyword id="KW-0012">Acyltransferase</keyword>
<keyword id="KW-0587">Phenylpropanoid metabolism</keyword>
<keyword id="KW-0808">Transferase</keyword>
<sequence>MDNIPNLTILEHSRISPPPSTIGHRSLPLTFFDIAWLLFPPVHHLYFYHFPYSKSHFTETVIPNLKHSLSITLQHYFPFVGKLIVYPNPHDSTRKPEIRHVEGDSVALTFAETTLDFNDLSANHPRKCENFYPLVPPLGNAVKESDYVTLPVFSVQVTYFPNSGISIGLTNHHSLSDANTRFGFLKAWASVCETGEDQPFLKNGSPPVFDRVVVNPQLYENRLNQTRLGTFYQAPSLVGSSSDRVRATFVLARTHISGLKKQVLTQLPMLEYTSSFTVTCGYIWSCIVKSLVNMGEKKGEDELEQFIVSVGCRSRLDPPLPENYFGNCSAPCIVTIKNGVLKGENGFVMAAKLIGEGISKMVNKKGGILEYADRWYDGFKIPARKMGISGTPKLNFYDIDFGWGKAMKYEVVSIDYSASVSLSACKESAQDFEIGVCFPSMQMEAFGKIFNDGLESAIAS</sequence>
<reference evidence="4 5" key="1">
    <citation type="journal article" date="2002" name="Plant Physiol.">
        <title>cDNA cloning, heterologous expressions, and functional characterization of malonyl-coenzyme a:anthocyanidin 3-o-glucoside-6''-o-malonyltransferase from dahlia flowers.</title>
        <authorList>
            <person name="Suzuki H."/>
            <person name="Nakayama T."/>
            <person name="Yonekura-Sakakibara K."/>
            <person name="Fukui Y."/>
            <person name="Nakamura N."/>
            <person name="Yamaguchi M.A."/>
            <person name="Tanaka Y."/>
            <person name="Kusumi T."/>
            <person name="Nishino T."/>
        </authorList>
    </citation>
    <scope>NUCLEOTIDE SEQUENCE [MRNA]</scope>
    <scope>FUNCTION</scope>
    <scope>CATALYTIC ACTIVITY</scope>
    <scope>ACTIVITY REGULATION</scope>
    <scope>BIOPHYSICOCHEMICAL PROPERTIES</scope>
    <scope>DEVELOPMENTAL STAGE</scope>
    <source>
        <strain evidence="2">cv. Kaen</strain>
        <tissue evidence="2">Petal</tissue>
    </source>
</reference>
<comment type="function">
    <text evidence="2">Catalyzes the transfer of the malonyl group from malonyl-CoA to pelargonidin 3-O-glucoside to produce pelargonidin 3-O-6''-O-malonylglucoside. Can also transfer the malonyl group from malonyl-CoA to cyanidin 3-O-glucoside, delphinidin 3-O-glucoside and quercetin 3-O-glucoside.</text>
</comment>
<comment type="catalytic activity">
    <reaction evidence="2">
        <text>an anthocyanidin 3-O-beta-D-glucoside + malonyl-CoA = an anthocyanidin 3-O-(6-O-malonyl-beta-D-glucoside) + CoA</text>
        <dbReference type="Rhea" id="RHEA:16025"/>
        <dbReference type="ChEBI" id="CHEBI:16307"/>
        <dbReference type="ChEBI" id="CHEBI:57287"/>
        <dbReference type="ChEBI" id="CHEBI:57384"/>
        <dbReference type="ChEBI" id="CHEBI:84163"/>
        <dbReference type="EC" id="2.3.1.171"/>
    </reaction>
</comment>
<comment type="activity regulation">
    <text evidence="2">Completely inhibited by 5 mM N-ethylmaleimide or 0.1 mM Cu(2+). Partially inhibited by 0.1 mM Fe(2+) or 0.1 mM Hg(2+).</text>
</comment>
<comment type="biophysicochemical properties">
    <kinetics>
        <KM evidence="2">18.8 uM for malonyl-CoA</KM>
        <KM evidence="2">46.7 uM for pelargonidin</KM>
    </kinetics>
    <phDependence>
        <text evidence="2">Optimum pH is 8.5. Active over the pH range 5.5-11.0. Stable from pH 6.5 to 7.5 for 20 hours at 20 degrees Celsius.</text>
    </phDependence>
    <temperatureDependence>
        <text evidence="2">Stable below 45 degrees Celsius for 20 minutes at pH 7.0.</text>
    </temperatureDependence>
</comment>
<comment type="developmental stage">
    <text evidence="2">Expression is highest in petals at stage 2 of flower development (when the top of the bud is open, flowers are 6-9 mm in length and almost pigmented).</text>
</comment>
<comment type="similarity">
    <text evidence="1">Belongs to the plant acyltransferase family.</text>
</comment>
<accession>Q8GSN8</accession>